<dbReference type="EMBL" id="DQ923117">
    <property type="protein sequence ID" value="ABI49878.1"/>
    <property type="molecule type" value="Genomic_DNA"/>
</dbReference>
<dbReference type="RefSeq" id="YP_740665.1">
    <property type="nucleotide sequence ID" value="NC_008336.1"/>
</dbReference>
<dbReference type="SMR" id="Q09FU6"/>
<dbReference type="GeneID" id="4271611"/>
<dbReference type="GO" id="GO:0009535">
    <property type="term" value="C:chloroplast thylakoid membrane"/>
    <property type="evidence" value="ECO:0007669"/>
    <property type="project" value="UniProtKB-SubCell"/>
</dbReference>
<dbReference type="GO" id="GO:0009539">
    <property type="term" value="C:photosystem II reaction center"/>
    <property type="evidence" value="ECO:0007669"/>
    <property type="project" value="InterPro"/>
</dbReference>
<dbReference type="GO" id="GO:0015979">
    <property type="term" value="P:photosynthesis"/>
    <property type="evidence" value="ECO:0007669"/>
    <property type="project" value="UniProtKB-UniRule"/>
</dbReference>
<dbReference type="HAMAP" id="MF_01317">
    <property type="entry name" value="PSII_PsbL"/>
    <property type="match status" value="1"/>
</dbReference>
<dbReference type="InterPro" id="IPR003372">
    <property type="entry name" value="PSII_PsbL"/>
</dbReference>
<dbReference type="InterPro" id="IPR037266">
    <property type="entry name" value="PSII_PsbL_sf"/>
</dbReference>
<dbReference type="NCBIfam" id="NF001972">
    <property type="entry name" value="PRK00753.1"/>
    <property type="match status" value="1"/>
</dbReference>
<dbReference type="Pfam" id="PF02419">
    <property type="entry name" value="PsbL"/>
    <property type="match status" value="1"/>
</dbReference>
<dbReference type="SUPFAM" id="SSF161017">
    <property type="entry name" value="Photosystem II reaction center protein L, PsbL"/>
    <property type="match status" value="1"/>
</dbReference>
<sequence>MTQSKSNPNEQNVELNRTSLYWGLLLIFVLAVLFSNYFFN</sequence>
<reference key="1">
    <citation type="journal article" date="2006" name="BMC Plant Biol.">
        <title>Rapid and accurate pyrosequencing of angiosperm plastid genomes.</title>
        <authorList>
            <person name="Moore M.J."/>
            <person name="Dhingra A."/>
            <person name="Soltis P.S."/>
            <person name="Shaw R."/>
            <person name="Farmerie W.G."/>
            <person name="Folta K.M."/>
            <person name="Soltis D.E."/>
        </authorList>
    </citation>
    <scope>NUCLEOTIDE SEQUENCE [LARGE SCALE GENOMIC DNA]</scope>
</reference>
<comment type="function">
    <text evidence="1">One of the components of the core complex of photosystem II (PSII). PSII is a light-driven water:plastoquinone oxidoreductase that uses light energy to abstract electrons from H(2)O, generating O(2) and a proton gradient subsequently used for ATP formation. It consists of a core antenna complex that captures photons, and an electron transfer chain that converts photonic excitation into a charge separation. This subunit is found at the monomer-monomer interface and is required for correct PSII assembly and/or dimerization.</text>
</comment>
<comment type="subunit">
    <text evidence="1">PSII is composed of 1 copy each of membrane proteins PsbA, PsbB, PsbC, PsbD, PsbE, PsbF, PsbH, PsbI, PsbJ, PsbK, PsbL, PsbM, PsbT, PsbX, PsbY, PsbZ, Psb30/Ycf12, at least 3 peripheral proteins of the oxygen-evolving complex and a large number of cofactors. It forms dimeric complexes.</text>
</comment>
<comment type="subcellular location">
    <subcellularLocation>
        <location evidence="1">Plastid</location>
        <location evidence="1">Chloroplast thylakoid membrane</location>
        <topology evidence="1">Single-pass membrane protein</topology>
    </subcellularLocation>
</comment>
<comment type="similarity">
    <text evidence="1">Belongs to the PsbL family.</text>
</comment>
<protein>
    <recommendedName>
        <fullName evidence="1">Photosystem II reaction center protein L</fullName>
        <shortName evidence="1">PSII-L</shortName>
    </recommendedName>
</protein>
<evidence type="ECO:0000255" key="1">
    <source>
        <dbReference type="HAMAP-Rule" id="MF_01317"/>
    </source>
</evidence>
<keyword id="KW-0150">Chloroplast</keyword>
<keyword id="KW-0472">Membrane</keyword>
<keyword id="KW-0602">Photosynthesis</keyword>
<keyword id="KW-0604">Photosystem II</keyword>
<keyword id="KW-0934">Plastid</keyword>
<keyword id="KW-0674">Reaction center</keyword>
<keyword id="KW-0793">Thylakoid</keyword>
<keyword id="KW-0812">Transmembrane</keyword>
<keyword id="KW-1133">Transmembrane helix</keyword>
<feature type="chain" id="PRO_0000306238" description="Photosystem II reaction center protein L">
    <location>
        <begin position="1"/>
        <end position="40"/>
    </location>
</feature>
<feature type="transmembrane region" description="Helical" evidence="1">
    <location>
        <begin position="19"/>
        <end position="39"/>
    </location>
</feature>
<gene>
    <name evidence="1" type="primary">psbL</name>
</gene>
<geneLocation type="chloroplast"/>
<organism>
    <name type="scientific">Nandina domestica</name>
    <name type="common">Heavenly bamboo</name>
    <dbReference type="NCBI Taxonomy" id="41776"/>
    <lineage>
        <taxon>Eukaryota</taxon>
        <taxon>Viridiplantae</taxon>
        <taxon>Streptophyta</taxon>
        <taxon>Embryophyta</taxon>
        <taxon>Tracheophyta</taxon>
        <taxon>Spermatophyta</taxon>
        <taxon>Magnoliopsida</taxon>
        <taxon>Ranunculales</taxon>
        <taxon>Berberidaceae</taxon>
        <taxon>Nandinoideae</taxon>
        <taxon>Nandineae</taxon>
        <taxon>Nandina</taxon>
    </lineage>
</organism>
<name>PSBL_NANDO</name>
<accession>Q09FU6</accession>
<proteinExistence type="inferred from homology"/>